<name>EX7L_SHESH</name>
<organism>
    <name type="scientific">Shewanella sediminis (strain HAW-EB3)</name>
    <dbReference type="NCBI Taxonomy" id="425104"/>
    <lineage>
        <taxon>Bacteria</taxon>
        <taxon>Pseudomonadati</taxon>
        <taxon>Pseudomonadota</taxon>
        <taxon>Gammaproteobacteria</taxon>
        <taxon>Alteromonadales</taxon>
        <taxon>Shewanellaceae</taxon>
        <taxon>Shewanella</taxon>
    </lineage>
</organism>
<comment type="function">
    <text evidence="1">Bidirectionally degrades single-stranded DNA into large acid-insoluble oligonucleotides, which are then degraded further into small acid-soluble oligonucleotides.</text>
</comment>
<comment type="catalytic activity">
    <reaction evidence="1">
        <text>Exonucleolytic cleavage in either 5'- to 3'- or 3'- to 5'-direction to yield nucleoside 5'-phosphates.</text>
        <dbReference type="EC" id="3.1.11.6"/>
    </reaction>
</comment>
<comment type="subunit">
    <text evidence="1">Heterooligomer composed of large and small subunits.</text>
</comment>
<comment type="subcellular location">
    <subcellularLocation>
        <location evidence="1">Cytoplasm</location>
    </subcellularLocation>
</comment>
<comment type="similarity">
    <text evidence="1">Belongs to the XseA family.</text>
</comment>
<evidence type="ECO:0000255" key="1">
    <source>
        <dbReference type="HAMAP-Rule" id="MF_00378"/>
    </source>
</evidence>
<gene>
    <name evidence="1" type="primary">xseA</name>
    <name type="ordered locus">Ssed_3125</name>
</gene>
<proteinExistence type="inferred from homology"/>
<feature type="chain" id="PRO_1000079994" description="Exodeoxyribonuclease 7 large subunit">
    <location>
        <begin position="1"/>
        <end position="442"/>
    </location>
</feature>
<reference key="1">
    <citation type="submission" date="2007-08" db="EMBL/GenBank/DDBJ databases">
        <title>Complete sequence of Shewanella sediminis HAW-EB3.</title>
        <authorList>
            <consortium name="US DOE Joint Genome Institute"/>
            <person name="Copeland A."/>
            <person name="Lucas S."/>
            <person name="Lapidus A."/>
            <person name="Barry K."/>
            <person name="Glavina del Rio T."/>
            <person name="Dalin E."/>
            <person name="Tice H."/>
            <person name="Pitluck S."/>
            <person name="Chertkov O."/>
            <person name="Brettin T."/>
            <person name="Bruce D."/>
            <person name="Detter J.C."/>
            <person name="Han C."/>
            <person name="Schmutz J."/>
            <person name="Larimer F."/>
            <person name="Land M."/>
            <person name="Hauser L."/>
            <person name="Kyrpides N."/>
            <person name="Kim E."/>
            <person name="Zhao J.-S."/>
            <person name="Richardson P."/>
        </authorList>
    </citation>
    <scope>NUCLEOTIDE SEQUENCE [LARGE SCALE GENOMIC DNA]</scope>
    <source>
        <strain>HAW-EB3</strain>
    </source>
</reference>
<accession>A8FY06</accession>
<sequence length="442" mass="49042">MKMPKNNVYTVSRLNGEVRQLLEGELGKIWLNAEISNFAAPGSGHWYLTLKDNFAQIRSAMFKGRNRSVTFKPVNGQQVLVKGSISVYEPRGDYQLIIESMLPAGDGLLAQQYEALKMKLAAEGLFAADTKRPMPTNIQKIGVITSATGAAIKDVLHVLARRDSSIEVVIYPTQVQGDSASKSICKAIQTANARQEVDVLLLTRGGGSLEDLWCFNNEDLAHEIYNSALPIVSAVGHEVDTTISDYVADVRAPTPSAGAELLSGDAENKSEKLATFIARLKQSWQHYQLKTEQRSRSLENRLHRQDPKRKLEQFQQSFDEIQIRLNAALNDKLHKSTLQQQSLSYRLNQQSPQHRLTLESKHLDYLTARLNEGIKGKLNDVEMSLKNSAHQLETVSPLATLSRGYSITQDESGKVLLSSKDTQAGDTITTRLLDGEVKSTVI</sequence>
<keyword id="KW-0963">Cytoplasm</keyword>
<keyword id="KW-0269">Exonuclease</keyword>
<keyword id="KW-0378">Hydrolase</keyword>
<keyword id="KW-0540">Nuclease</keyword>
<keyword id="KW-1185">Reference proteome</keyword>
<protein>
    <recommendedName>
        <fullName evidence="1">Exodeoxyribonuclease 7 large subunit</fullName>
        <ecNumber evidence="1">3.1.11.6</ecNumber>
    </recommendedName>
    <alternativeName>
        <fullName evidence="1">Exodeoxyribonuclease VII large subunit</fullName>
        <shortName evidence="1">Exonuclease VII large subunit</shortName>
    </alternativeName>
</protein>
<dbReference type="EC" id="3.1.11.6" evidence="1"/>
<dbReference type="EMBL" id="CP000821">
    <property type="protein sequence ID" value="ABV37729.1"/>
    <property type="molecule type" value="Genomic_DNA"/>
</dbReference>
<dbReference type="RefSeq" id="WP_012143459.1">
    <property type="nucleotide sequence ID" value="NC_009831.1"/>
</dbReference>
<dbReference type="SMR" id="A8FY06"/>
<dbReference type="STRING" id="425104.Ssed_3125"/>
<dbReference type="KEGG" id="sse:Ssed_3125"/>
<dbReference type="eggNOG" id="COG1570">
    <property type="taxonomic scope" value="Bacteria"/>
</dbReference>
<dbReference type="HOGENOM" id="CLU_023625_3_1_6"/>
<dbReference type="OrthoDB" id="9802795at2"/>
<dbReference type="Proteomes" id="UP000002015">
    <property type="component" value="Chromosome"/>
</dbReference>
<dbReference type="GO" id="GO:0005737">
    <property type="term" value="C:cytoplasm"/>
    <property type="evidence" value="ECO:0007669"/>
    <property type="project" value="UniProtKB-SubCell"/>
</dbReference>
<dbReference type="GO" id="GO:0009318">
    <property type="term" value="C:exodeoxyribonuclease VII complex"/>
    <property type="evidence" value="ECO:0007669"/>
    <property type="project" value="InterPro"/>
</dbReference>
<dbReference type="GO" id="GO:0008855">
    <property type="term" value="F:exodeoxyribonuclease VII activity"/>
    <property type="evidence" value="ECO:0007669"/>
    <property type="project" value="UniProtKB-UniRule"/>
</dbReference>
<dbReference type="GO" id="GO:0003676">
    <property type="term" value="F:nucleic acid binding"/>
    <property type="evidence" value="ECO:0007669"/>
    <property type="project" value="InterPro"/>
</dbReference>
<dbReference type="GO" id="GO:0006308">
    <property type="term" value="P:DNA catabolic process"/>
    <property type="evidence" value="ECO:0007669"/>
    <property type="project" value="UniProtKB-UniRule"/>
</dbReference>
<dbReference type="CDD" id="cd04489">
    <property type="entry name" value="ExoVII_LU_OBF"/>
    <property type="match status" value="1"/>
</dbReference>
<dbReference type="HAMAP" id="MF_00378">
    <property type="entry name" value="Exonuc_7_L"/>
    <property type="match status" value="1"/>
</dbReference>
<dbReference type="InterPro" id="IPR003753">
    <property type="entry name" value="Exonuc_VII_L"/>
</dbReference>
<dbReference type="InterPro" id="IPR020579">
    <property type="entry name" value="Exonuc_VII_lsu_C"/>
</dbReference>
<dbReference type="InterPro" id="IPR025824">
    <property type="entry name" value="OB-fold_nuc-bd_dom"/>
</dbReference>
<dbReference type="NCBIfam" id="TIGR00237">
    <property type="entry name" value="xseA"/>
    <property type="match status" value="1"/>
</dbReference>
<dbReference type="PANTHER" id="PTHR30008">
    <property type="entry name" value="EXODEOXYRIBONUCLEASE 7 LARGE SUBUNIT"/>
    <property type="match status" value="1"/>
</dbReference>
<dbReference type="PANTHER" id="PTHR30008:SF0">
    <property type="entry name" value="EXODEOXYRIBONUCLEASE 7 LARGE SUBUNIT"/>
    <property type="match status" value="1"/>
</dbReference>
<dbReference type="Pfam" id="PF02601">
    <property type="entry name" value="Exonuc_VII_L"/>
    <property type="match status" value="1"/>
</dbReference>
<dbReference type="Pfam" id="PF13742">
    <property type="entry name" value="tRNA_anti_2"/>
    <property type="match status" value="1"/>
</dbReference>